<dbReference type="EC" id="4.1.1.39" evidence="1"/>
<dbReference type="EMBL" id="X81094">
    <property type="protein sequence ID" value="CAA57000.1"/>
    <property type="molecule type" value="Genomic_DNA"/>
</dbReference>
<dbReference type="SMR" id="Q31946"/>
<dbReference type="GO" id="GO:0009507">
    <property type="term" value="C:chloroplast"/>
    <property type="evidence" value="ECO:0007669"/>
    <property type="project" value="UniProtKB-SubCell"/>
</dbReference>
<dbReference type="GO" id="GO:0000287">
    <property type="term" value="F:magnesium ion binding"/>
    <property type="evidence" value="ECO:0007669"/>
    <property type="project" value="InterPro"/>
</dbReference>
<dbReference type="GO" id="GO:0004497">
    <property type="term" value="F:monooxygenase activity"/>
    <property type="evidence" value="ECO:0007669"/>
    <property type="project" value="UniProtKB-KW"/>
</dbReference>
<dbReference type="GO" id="GO:0016984">
    <property type="term" value="F:ribulose-bisphosphate carboxylase activity"/>
    <property type="evidence" value="ECO:0007669"/>
    <property type="project" value="UniProtKB-EC"/>
</dbReference>
<dbReference type="GO" id="GO:0009853">
    <property type="term" value="P:photorespiration"/>
    <property type="evidence" value="ECO:0007669"/>
    <property type="project" value="UniProtKB-KW"/>
</dbReference>
<dbReference type="GO" id="GO:0019253">
    <property type="term" value="P:reductive pentose-phosphate cycle"/>
    <property type="evidence" value="ECO:0007669"/>
    <property type="project" value="UniProtKB-KW"/>
</dbReference>
<dbReference type="CDD" id="cd08212">
    <property type="entry name" value="RuBisCO_large_I"/>
    <property type="match status" value="1"/>
</dbReference>
<dbReference type="FunFam" id="3.20.20.110:FF:000003">
    <property type="entry name" value="Ribulose bisphosphate carboxylase large chain"/>
    <property type="match status" value="1"/>
</dbReference>
<dbReference type="FunFam" id="3.30.70.150:FF:000001">
    <property type="entry name" value="Ribulose bisphosphate carboxylase large chain"/>
    <property type="match status" value="1"/>
</dbReference>
<dbReference type="Gene3D" id="3.20.20.110">
    <property type="entry name" value="Ribulose bisphosphate carboxylase, large subunit, C-terminal domain"/>
    <property type="match status" value="1"/>
</dbReference>
<dbReference type="Gene3D" id="3.30.70.150">
    <property type="entry name" value="RuBisCO large subunit, N-terminal domain"/>
    <property type="match status" value="1"/>
</dbReference>
<dbReference type="HAMAP" id="MF_01338">
    <property type="entry name" value="RuBisCO_L_type1"/>
    <property type="match status" value="1"/>
</dbReference>
<dbReference type="InterPro" id="IPR033966">
    <property type="entry name" value="RuBisCO"/>
</dbReference>
<dbReference type="InterPro" id="IPR020878">
    <property type="entry name" value="RuBisCo_large_chain_AS"/>
</dbReference>
<dbReference type="InterPro" id="IPR000685">
    <property type="entry name" value="RuBisCO_lsu_C"/>
</dbReference>
<dbReference type="InterPro" id="IPR036376">
    <property type="entry name" value="RuBisCO_lsu_C_sf"/>
</dbReference>
<dbReference type="InterPro" id="IPR017443">
    <property type="entry name" value="RuBisCO_lsu_fd_N"/>
</dbReference>
<dbReference type="InterPro" id="IPR036422">
    <property type="entry name" value="RuBisCO_lsu_N_sf"/>
</dbReference>
<dbReference type="InterPro" id="IPR020888">
    <property type="entry name" value="RuBisCO_lsuI"/>
</dbReference>
<dbReference type="NCBIfam" id="NF003252">
    <property type="entry name" value="PRK04208.1"/>
    <property type="match status" value="1"/>
</dbReference>
<dbReference type="PANTHER" id="PTHR42704">
    <property type="entry name" value="RIBULOSE BISPHOSPHATE CARBOXYLASE"/>
    <property type="match status" value="1"/>
</dbReference>
<dbReference type="PANTHER" id="PTHR42704:SF16">
    <property type="entry name" value="RIBULOSE BISPHOSPHATE CARBOXYLASE LARGE CHAIN"/>
    <property type="match status" value="1"/>
</dbReference>
<dbReference type="Pfam" id="PF00016">
    <property type="entry name" value="RuBisCO_large"/>
    <property type="match status" value="1"/>
</dbReference>
<dbReference type="Pfam" id="PF02788">
    <property type="entry name" value="RuBisCO_large_N"/>
    <property type="match status" value="1"/>
</dbReference>
<dbReference type="SFLD" id="SFLDG01052">
    <property type="entry name" value="RuBisCO"/>
    <property type="match status" value="1"/>
</dbReference>
<dbReference type="SFLD" id="SFLDS00014">
    <property type="entry name" value="RuBisCO"/>
    <property type="match status" value="1"/>
</dbReference>
<dbReference type="SFLD" id="SFLDG00301">
    <property type="entry name" value="RuBisCO-like_proteins"/>
    <property type="match status" value="1"/>
</dbReference>
<dbReference type="SUPFAM" id="SSF51649">
    <property type="entry name" value="RuBisCo, C-terminal domain"/>
    <property type="match status" value="1"/>
</dbReference>
<dbReference type="SUPFAM" id="SSF54966">
    <property type="entry name" value="RuBisCO, large subunit, small (N-terminal) domain"/>
    <property type="match status" value="1"/>
</dbReference>
<dbReference type="PROSITE" id="PS00157">
    <property type="entry name" value="RUBISCO_LARGE"/>
    <property type="match status" value="1"/>
</dbReference>
<protein>
    <recommendedName>
        <fullName evidence="1">Ribulose bisphosphate carboxylase large chain</fullName>
        <shortName evidence="1">RuBisCO large subunit</shortName>
        <ecNumber evidence="1">4.1.1.39</ecNumber>
    </recommendedName>
</protein>
<name>RBL_CRUAN</name>
<accession>Q31946</accession>
<sequence length="453" mass="50307">MSPQTETKAGVGFKAGVKEYKLTYYTPEYETKDTDILAAFRVTPQPGVPPEERGDAVAAESSTGTWTTVWTDGLTSLDRYKGRCYHIEPVPGEEDQFIAYVAYPLDLFEEGSVTNMFTSIVGNVFGFKALRALRLEDLRIPVAYVKTFQGPPHGIQVERDKLNKYGRPLLGCTIKPKLGLSAKNYGRAVYECLRGGLDFTKDDENVNSQPFMRWRDRFLFCAEAIYKSQAETGEIKGHYLNATAGTCEEMIKRAVFARELGVPIVMHDYLTGGFTANTSLSHYCRDNGLLLHIHRAMHAVIDRQKNHGMHFRVLAKALRMSGGDHIHSGTVVGKLEGERDITLGFVDLLRDDYIEQDRSRGIYFTQDWVSLPGVLPVASRGIHVWHMPALTEIFGDDSVLQFGGGTLGHPWGNAPGAVANRVALEACVKARNEGRDLAAEGGEIIREACKWSP</sequence>
<proteinExistence type="inferred from homology"/>
<gene>
    <name evidence="1" type="primary">rbcL</name>
</gene>
<organism>
    <name type="scientific">Crucianella angustifolia</name>
    <name type="common">Narrow-leaved crosswort</name>
    <dbReference type="NCBI Taxonomy" id="29784"/>
    <lineage>
        <taxon>Eukaryota</taxon>
        <taxon>Viridiplantae</taxon>
        <taxon>Streptophyta</taxon>
        <taxon>Embryophyta</taxon>
        <taxon>Tracheophyta</taxon>
        <taxon>Spermatophyta</taxon>
        <taxon>Magnoliopsida</taxon>
        <taxon>eudicotyledons</taxon>
        <taxon>Gunneridae</taxon>
        <taxon>Pentapetalae</taxon>
        <taxon>asterids</taxon>
        <taxon>lamiids</taxon>
        <taxon>Gentianales</taxon>
        <taxon>Rubiaceae</taxon>
        <taxon>Rubioideae</taxon>
        <taxon>Rubieae</taxon>
        <taxon>Crucianella</taxon>
    </lineage>
</organism>
<comment type="function">
    <text evidence="1">RuBisCO catalyzes two reactions: the carboxylation of D-ribulose 1,5-bisphosphate, the primary event in carbon dioxide fixation, as well as the oxidative fragmentation of the pentose substrate in the photorespiration process. Both reactions occur simultaneously and in competition at the same active site.</text>
</comment>
<comment type="catalytic activity">
    <reaction evidence="1">
        <text>2 (2R)-3-phosphoglycerate + 2 H(+) = D-ribulose 1,5-bisphosphate + CO2 + H2O</text>
        <dbReference type="Rhea" id="RHEA:23124"/>
        <dbReference type="ChEBI" id="CHEBI:15377"/>
        <dbReference type="ChEBI" id="CHEBI:15378"/>
        <dbReference type="ChEBI" id="CHEBI:16526"/>
        <dbReference type="ChEBI" id="CHEBI:57870"/>
        <dbReference type="ChEBI" id="CHEBI:58272"/>
        <dbReference type="EC" id="4.1.1.39"/>
    </reaction>
</comment>
<comment type="catalytic activity">
    <reaction evidence="1">
        <text>D-ribulose 1,5-bisphosphate + O2 = 2-phosphoglycolate + (2R)-3-phosphoglycerate + 2 H(+)</text>
        <dbReference type="Rhea" id="RHEA:36631"/>
        <dbReference type="ChEBI" id="CHEBI:15378"/>
        <dbReference type="ChEBI" id="CHEBI:15379"/>
        <dbReference type="ChEBI" id="CHEBI:57870"/>
        <dbReference type="ChEBI" id="CHEBI:58033"/>
        <dbReference type="ChEBI" id="CHEBI:58272"/>
    </reaction>
</comment>
<comment type="cofactor">
    <cofactor evidence="1">
        <name>Mg(2+)</name>
        <dbReference type="ChEBI" id="CHEBI:18420"/>
    </cofactor>
    <text evidence="1">Binds 1 Mg(2+) ion per subunit.</text>
</comment>
<comment type="subunit">
    <text evidence="1">Heterohexadecamer of 8 large chains and 8 small chains; disulfide-linked. The disulfide link is formed within the large subunit homodimers.</text>
</comment>
<comment type="subcellular location">
    <subcellularLocation>
        <location>Plastid</location>
        <location>Chloroplast</location>
    </subcellularLocation>
</comment>
<comment type="PTM">
    <text evidence="1">The disulfide bond which can form in the large chain dimeric partners within the hexadecamer appears to be associated with oxidative stress and protein turnover.</text>
</comment>
<comment type="miscellaneous">
    <text evidence="1">The basic functional RuBisCO is composed of a large chain homodimer in a 'head-to-tail' conformation. In form I RuBisCO this homodimer is arranged in a barrel-like tetramer with the small subunits forming a tetrameric 'cap' on each end of the 'barrel'.</text>
</comment>
<comment type="similarity">
    <text evidence="1">Belongs to the RuBisCO large chain family. Type I subfamily.</text>
</comment>
<reference key="1">
    <citation type="journal article" date="1995" name="J. Mol. Evol.">
        <title>Comparison of the evolution of ribulose-1, 5-biphosphate carboxylase (rbcL) and atpB-rbcL noncoding spacer sequences in a recent plant group, the tribe Rubieae (Rubiaceae).</title>
        <authorList>
            <person name="Manen J.F."/>
            <person name="Natali A."/>
        </authorList>
    </citation>
    <scope>NUCLEOTIDE SEQUENCE [GENOMIC DNA]</scope>
</reference>
<geneLocation type="chloroplast"/>
<keyword id="KW-0007">Acetylation</keyword>
<keyword id="KW-0113">Calvin cycle</keyword>
<keyword id="KW-0120">Carbon dioxide fixation</keyword>
<keyword id="KW-0150">Chloroplast</keyword>
<keyword id="KW-1015">Disulfide bond</keyword>
<keyword id="KW-0456">Lyase</keyword>
<keyword id="KW-0460">Magnesium</keyword>
<keyword id="KW-0479">Metal-binding</keyword>
<keyword id="KW-0488">Methylation</keyword>
<keyword id="KW-0503">Monooxygenase</keyword>
<keyword id="KW-0560">Oxidoreductase</keyword>
<keyword id="KW-0601">Photorespiration</keyword>
<keyword id="KW-0602">Photosynthesis</keyword>
<keyword id="KW-0934">Plastid</keyword>
<feature type="propeptide" id="PRO_0000031191" evidence="1">
    <location>
        <begin position="1"/>
        <end position="2"/>
    </location>
</feature>
<feature type="chain" id="PRO_0000031192" description="Ribulose bisphosphate carboxylase large chain">
    <location>
        <begin position="3"/>
        <end position="453" status="greater than"/>
    </location>
</feature>
<feature type="active site" description="Proton acceptor" evidence="1">
    <location>
        <position position="175"/>
    </location>
</feature>
<feature type="active site" description="Proton acceptor" evidence="1">
    <location>
        <position position="294"/>
    </location>
</feature>
<feature type="binding site" description="in homodimeric partner" evidence="1">
    <location>
        <position position="123"/>
    </location>
    <ligand>
        <name>substrate</name>
    </ligand>
</feature>
<feature type="binding site" evidence="1">
    <location>
        <position position="173"/>
    </location>
    <ligand>
        <name>substrate</name>
    </ligand>
</feature>
<feature type="binding site" evidence="1">
    <location>
        <position position="177"/>
    </location>
    <ligand>
        <name>substrate</name>
    </ligand>
</feature>
<feature type="binding site" description="via carbamate group" evidence="1">
    <location>
        <position position="201"/>
    </location>
    <ligand>
        <name>Mg(2+)</name>
        <dbReference type="ChEBI" id="CHEBI:18420"/>
    </ligand>
</feature>
<feature type="binding site" evidence="1">
    <location>
        <position position="203"/>
    </location>
    <ligand>
        <name>Mg(2+)</name>
        <dbReference type="ChEBI" id="CHEBI:18420"/>
    </ligand>
</feature>
<feature type="binding site" evidence="1">
    <location>
        <position position="204"/>
    </location>
    <ligand>
        <name>Mg(2+)</name>
        <dbReference type="ChEBI" id="CHEBI:18420"/>
    </ligand>
</feature>
<feature type="binding site" evidence="1">
    <location>
        <position position="295"/>
    </location>
    <ligand>
        <name>substrate</name>
    </ligand>
</feature>
<feature type="binding site" evidence="1">
    <location>
        <position position="327"/>
    </location>
    <ligand>
        <name>substrate</name>
    </ligand>
</feature>
<feature type="binding site" evidence="1">
    <location>
        <position position="379"/>
    </location>
    <ligand>
        <name>substrate</name>
    </ligand>
</feature>
<feature type="site" description="Transition state stabilizer" evidence="1">
    <location>
        <position position="334"/>
    </location>
</feature>
<feature type="modified residue" description="N-acetylproline" evidence="1">
    <location>
        <position position="3"/>
    </location>
</feature>
<feature type="modified residue" description="N6,N6,N6-trimethyllysine" evidence="1">
    <location>
        <position position="14"/>
    </location>
</feature>
<feature type="modified residue" description="N6-carboxylysine" evidence="1">
    <location>
        <position position="201"/>
    </location>
</feature>
<feature type="disulfide bond" description="Interchain; in linked form" evidence="1">
    <location>
        <position position="247"/>
    </location>
</feature>
<feature type="non-terminal residue">
    <location>
        <position position="453"/>
    </location>
</feature>
<evidence type="ECO:0000255" key="1">
    <source>
        <dbReference type="HAMAP-Rule" id="MF_01338"/>
    </source>
</evidence>